<comment type="subcellular location">
    <subcellularLocation>
        <location evidence="1">Cell inner membrane</location>
        <topology evidence="1">Multi-pass membrane protein</topology>
    </subcellularLocation>
</comment>
<comment type="similarity">
    <text evidence="1">Belongs to the UPF0299 family.</text>
</comment>
<protein>
    <recommendedName>
        <fullName evidence="1">UPF0299 membrane protein KPK_1586</fullName>
    </recommendedName>
</protein>
<keyword id="KW-0997">Cell inner membrane</keyword>
<keyword id="KW-1003">Cell membrane</keyword>
<keyword id="KW-0472">Membrane</keyword>
<keyword id="KW-0812">Transmembrane</keyword>
<keyword id="KW-1133">Transmembrane helix</keyword>
<evidence type="ECO:0000255" key="1">
    <source>
        <dbReference type="HAMAP-Rule" id="MF_01144"/>
    </source>
</evidence>
<dbReference type="EMBL" id="CP000964">
    <property type="protein sequence ID" value="ACI06630.1"/>
    <property type="molecule type" value="Genomic_DNA"/>
</dbReference>
<dbReference type="SMR" id="B5XP67"/>
<dbReference type="KEGG" id="kpe:KPK_1586"/>
<dbReference type="HOGENOM" id="CLU_113736_1_1_6"/>
<dbReference type="BioCyc" id="KPNE507522:GI0B-1585-MONOMER"/>
<dbReference type="Proteomes" id="UP000001734">
    <property type="component" value="Chromosome"/>
</dbReference>
<dbReference type="GO" id="GO:0005886">
    <property type="term" value="C:plasma membrane"/>
    <property type="evidence" value="ECO:0007669"/>
    <property type="project" value="UniProtKB-SubCell"/>
</dbReference>
<dbReference type="HAMAP" id="MF_01144">
    <property type="entry name" value="UPF0299"/>
    <property type="match status" value="1"/>
</dbReference>
<dbReference type="InterPro" id="IPR005538">
    <property type="entry name" value="LrgA/CidA"/>
</dbReference>
<dbReference type="InterPro" id="IPR022957">
    <property type="entry name" value="Uncharacterised_UPF0299"/>
</dbReference>
<dbReference type="NCBIfam" id="NF002494">
    <property type="entry name" value="PRK01821.1"/>
    <property type="match status" value="1"/>
</dbReference>
<dbReference type="PANTHER" id="PTHR33931">
    <property type="entry name" value="HOLIN-LIKE PROTEIN CIDA-RELATED"/>
    <property type="match status" value="1"/>
</dbReference>
<dbReference type="PANTHER" id="PTHR33931:SF5">
    <property type="entry name" value="UPF0299 MEMBRANE PROTEIN YOHJ"/>
    <property type="match status" value="1"/>
</dbReference>
<dbReference type="Pfam" id="PF03788">
    <property type="entry name" value="LrgA"/>
    <property type="match status" value="1"/>
</dbReference>
<reference key="1">
    <citation type="journal article" date="2008" name="PLoS Genet.">
        <title>Complete genome sequence of the N2-fixing broad host range endophyte Klebsiella pneumoniae 342 and virulence predictions verified in mice.</title>
        <authorList>
            <person name="Fouts D.E."/>
            <person name="Tyler H.L."/>
            <person name="DeBoy R.T."/>
            <person name="Daugherty S."/>
            <person name="Ren Q."/>
            <person name="Badger J.H."/>
            <person name="Durkin A.S."/>
            <person name="Huot H."/>
            <person name="Shrivastava S."/>
            <person name="Kothari S."/>
            <person name="Dodson R.J."/>
            <person name="Mohamoud Y."/>
            <person name="Khouri H."/>
            <person name="Roesch L.F.W."/>
            <person name="Krogfelt K.A."/>
            <person name="Struve C."/>
            <person name="Triplett E.W."/>
            <person name="Methe B.A."/>
        </authorList>
    </citation>
    <scope>NUCLEOTIDE SEQUENCE [LARGE SCALE GENOMIC DNA]</scope>
    <source>
        <strain>342</strain>
    </source>
</reference>
<feature type="chain" id="PRO_1000137366" description="UPF0299 membrane protein KPK_1586">
    <location>
        <begin position="1"/>
        <end position="134"/>
    </location>
</feature>
<feature type="transmembrane region" description="Helical" evidence="1">
    <location>
        <begin position="5"/>
        <end position="25"/>
    </location>
</feature>
<feature type="transmembrane region" description="Helical" evidence="1">
    <location>
        <begin position="26"/>
        <end position="46"/>
    </location>
</feature>
<feature type="transmembrane region" description="Helical" evidence="1">
    <location>
        <begin position="66"/>
        <end position="86"/>
    </location>
</feature>
<feature type="transmembrane region" description="Helical" evidence="1">
    <location>
        <begin position="93"/>
        <end position="113"/>
    </location>
</feature>
<organism>
    <name type="scientific">Klebsiella pneumoniae (strain 342)</name>
    <dbReference type="NCBI Taxonomy" id="507522"/>
    <lineage>
        <taxon>Bacteria</taxon>
        <taxon>Pseudomonadati</taxon>
        <taxon>Pseudomonadota</taxon>
        <taxon>Gammaproteobacteria</taxon>
        <taxon>Enterobacterales</taxon>
        <taxon>Enterobacteriaceae</taxon>
        <taxon>Klebsiella/Raoultella group</taxon>
        <taxon>Klebsiella</taxon>
        <taxon>Klebsiella pneumoniae complex</taxon>
    </lineage>
</organism>
<proteinExistence type="inferred from homology"/>
<gene>
    <name type="ordered locus">KPK_1586</name>
</gene>
<sequence>MSKSLTIIWQYLRAFVLIYACLYAGIFIAGLLPITIPGSIIGMLILFVLLALQIMPPQWVNPGCNILIRYMALLFVPIGVGVMQYWDLLRAQLGPVVISCAISTLVVFVVVSWSSHLVHGERKVIGQKEKKNDA</sequence>
<accession>B5XP67</accession>
<name>Y1586_KLEP3</name>